<sequence length="517" mass="56468">MLNEPNALLRRDANSTIATVTELFPNEYSNADIAYVLLSTVVVFTVTPGIALYYAGMVRKNSALSILTQSFLVTAVVFIQWYLFGYSLACSSGSSFYGTLWQGGMNHLWLEPYIPGSTIPAIVYFPFGGLFAVATAQLFAGAMAERGRLIPSLVISFLYITLVYCPQAYWTWAPNGWLYTLGALDFAGGGPVHISSGFAALAYSLCLGRRIVVDEPDRPDSIRSTDNADLPSSSQNNCKANWKRWFGFKSVSWKNSFGRGKIAHNPPHDAGMVYIGVVLIWFAWLCFNSGTLLTVNIRTAYIMTNTLISSSFGALTWAIIDYIRYRKFSTIGICEGAIAGLVGITPACGFVFPWGAAAGGIVPALVCNFLHDLNEWIGVDETLRVFNLHGIGGIVGSIVLGVVAHPDVAASDGATVIDGGWAVHHWKQMGYQFAGFTSVAAWSFVITAIICLLVDLVPGLHIRASFEEELRGMDFVELEEQLPGQTLESKPMIIYAQEMDEPVTQGSNIKQEKQDEF</sequence>
<name>AMT3_SCHPO</name>
<comment type="function">
    <text evidence="3">Transporter for ammonium to use as a nitrogen source.</text>
</comment>
<comment type="subcellular location">
    <subcellularLocation>
        <location evidence="2">Membrane</location>
        <topology evidence="2">Multi-pass membrane protein</topology>
    </subcellularLocation>
</comment>
<comment type="similarity">
    <text evidence="4">Belongs to the ammonia transporter channel (TC 1.A.11.2) family.</text>
</comment>
<evidence type="ECO:0000255" key="1"/>
<evidence type="ECO:0000269" key="2">
    <source>
    </source>
</evidence>
<evidence type="ECO:0000269" key="3">
    <source>
    </source>
</evidence>
<evidence type="ECO:0000305" key="4"/>
<organism>
    <name type="scientific">Schizosaccharomyces pombe (strain 972 / ATCC 24843)</name>
    <name type="common">Fission yeast</name>
    <dbReference type="NCBI Taxonomy" id="284812"/>
    <lineage>
        <taxon>Eukaryota</taxon>
        <taxon>Fungi</taxon>
        <taxon>Dikarya</taxon>
        <taxon>Ascomycota</taxon>
        <taxon>Taphrinomycotina</taxon>
        <taxon>Schizosaccharomycetes</taxon>
        <taxon>Schizosaccharomycetales</taxon>
        <taxon>Schizosaccharomycetaceae</taxon>
        <taxon>Schizosaccharomyces</taxon>
    </lineage>
</organism>
<accession>Q9P7F3</accession>
<protein>
    <recommendedName>
        <fullName>Ammonium transporter 3</fullName>
    </recommendedName>
    <alternativeName>
        <fullName>Ammonium transporter mep3</fullName>
    </alternativeName>
</protein>
<dbReference type="EMBL" id="CU329670">
    <property type="protein sequence ID" value="CAB83006.1"/>
    <property type="molecule type" value="Genomic_DNA"/>
</dbReference>
<dbReference type="RefSeq" id="NP_593983.1">
    <property type="nucleotide sequence ID" value="NM_001019409.2"/>
</dbReference>
<dbReference type="SMR" id="Q9P7F3"/>
<dbReference type="BioGRID" id="278286">
    <property type="interactions" value="10"/>
</dbReference>
<dbReference type="FunCoup" id="Q9P7F3">
    <property type="interactions" value="75"/>
</dbReference>
<dbReference type="STRING" id="284812.Q9P7F3"/>
<dbReference type="PaxDb" id="4896-SPAC2E1P3.02c.1"/>
<dbReference type="EnsemblFungi" id="SPAC2E1P3.02c.1">
    <property type="protein sequence ID" value="SPAC2E1P3.02c.1:pep"/>
    <property type="gene ID" value="SPAC2E1P3.02c"/>
</dbReference>
<dbReference type="GeneID" id="2541795"/>
<dbReference type="KEGG" id="spo:2541795"/>
<dbReference type="PomBase" id="SPAC2E1P3.02c">
    <property type="gene designation" value="amt3"/>
</dbReference>
<dbReference type="VEuPathDB" id="FungiDB:SPAC2E1P3.02c"/>
<dbReference type="eggNOG" id="KOG0682">
    <property type="taxonomic scope" value="Eukaryota"/>
</dbReference>
<dbReference type="HOGENOM" id="CLU_000445_33_0_1"/>
<dbReference type="InParanoid" id="Q9P7F3"/>
<dbReference type="OMA" id="CGFAYLE"/>
<dbReference type="PhylomeDB" id="Q9P7F3"/>
<dbReference type="PRO" id="PR:Q9P7F3"/>
<dbReference type="Proteomes" id="UP000002485">
    <property type="component" value="Chromosome I"/>
</dbReference>
<dbReference type="GO" id="GO:0000324">
    <property type="term" value="C:fungal-type vacuole"/>
    <property type="evidence" value="ECO:0007005"/>
    <property type="project" value="PomBase"/>
</dbReference>
<dbReference type="GO" id="GO:0005886">
    <property type="term" value="C:plasma membrane"/>
    <property type="evidence" value="ECO:0000318"/>
    <property type="project" value="GO_Central"/>
</dbReference>
<dbReference type="GO" id="GO:0008519">
    <property type="term" value="F:ammonium channel activity"/>
    <property type="evidence" value="ECO:0000316"/>
    <property type="project" value="PomBase"/>
</dbReference>
<dbReference type="GO" id="GO:0015200">
    <property type="term" value="F:methylammonium transmembrane transporter activity"/>
    <property type="evidence" value="ECO:0000315"/>
    <property type="project" value="PomBase"/>
</dbReference>
<dbReference type="GO" id="GO:0072488">
    <property type="term" value="P:ammonium transmembrane transport"/>
    <property type="evidence" value="ECO:0000316"/>
    <property type="project" value="PomBase"/>
</dbReference>
<dbReference type="GO" id="GO:0072489">
    <property type="term" value="P:methylammonium transmembrane transport"/>
    <property type="evidence" value="ECO:0000315"/>
    <property type="project" value="PomBase"/>
</dbReference>
<dbReference type="Gene3D" id="1.10.3430.10">
    <property type="entry name" value="Ammonium transporter AmtB like domains"/>
    <property type="match status" value="1"/>
</dbReference>
<dbReference type="InterPro" id="IPR029020">
    <property type="entry name" value="Ammonium/urea_transptr"/>
</dbReference>
<dbReference type="InterPro" id="IPR001905">
    <property type="entry name" value="Ammonium_transpt"/>
</dbReference>
<dbReference type="InterPro" id="IPR024041">
    <property type="entry name" value="NH4_transpt_AmtB-like_dom"/>
</dbReference>
<dbReference type="PANTHER" id="PTHR43029:SF3">
    <property type="entry name" value="AMMONIUM TRANSPORTER 3"/>
    <property type="match status" value="1"/>
</dbReference>
<dbReference type="PANTHER" id="PTHR43029">
    <property type="entry name" value="AMMONIUM TRANSPORTER MEP2"/>
    <property type="match status" value="1"/>
</dbReference>
<dbReference type="Pfam" id="PF00909">
    <property type="entry name" value="Ammonium_transp"/>
    <property type="match status" value="2"/>
</dbReference>
<dbReference type="SUPFAM" id="SSF111352">
    <property type="entry name" value="Ammonium transporter"/>
    <property type="match status" value="1"/>
</dbReference>
<keyword id="KW-0924">Ammonia transport</keyword>
<keyword id="KW-0472">Membrane</keyword>
<keyword id="KW-1185">Reference proteome</keyword>
<keyword id="KW-0812">Transmembrane</keyword>
<keyword id="KW-1133">Transmembrane helix</keyword>
<keyword id="KW-0813">Transport</keyword>
<gene>
    <name type="primary">amt3</name>
    <name type="synonym">mep3</name>
    <name type="ORF">SPAC2E1P3.02c</name>
</gene>
<proteinExistence type="inferred from homology"/>
<reference key="1">
    <citation type="journal article" date="2002" name="Nature">
        <title>The genome sequence of Schizosaccharomyces pombe.</title>
        <authorList>
            <person name="Wood V."/>
            <person name="Gwilliam R."/>
            <person name="Rajandream M.A."/>
            <person name="Lyne M.H."/>
            <person name="Lyne R."/>
            <person name="Stewart A."/>
            <person name="Sgouros J.G."/>
            <person name="Peat N."/>
            <person name="Hayles J."/>
            <person name="Baker S.G."/>
            <person name="Basham D."/>
            <person name="Bowman S."/>
            <person name="Brooks K."/>
            <person name="Brown D."/>
            <person name="Brown S."/>
            <person name="Chillingworth T."/>
            <person name="Churcher C.M."/>
            <person name="Collins M."/>
            <person name="Connor R."/>
            <person name="Cronin A."/>
            <person name="Davis P."/>
            <person name="Feltwell T."/>
            <person name="Fraser A."/>
            <person name="Gentles S."/>
            <person name="Goble A."/>
            <person name="Hamlin N."/>
            <person name="Harris D.E."/>
            <person name="Hidalgo J."/>
            <person name="Hodgson G."/>
            <person name="Holroyd S."/>
            <person name="Hornsby T."/>
            <person name="Howarth S."/>
            <person name="Huckle E.J."/>
            <person name="Hunt S."/>
            <person name="Jagels K."/>
            <person name="James K.D."/>
            <person name="Jones L."/>
            <person name="Jones M."/>
            <person name="Leather S."/>
            <person name="McDonald S."/>
            <person name="McLean J."/>
            <person name="Mooney P."/>
            <person name="Moule S."/>
            <person name="Mungall K.L."/>
            <person name="Murphy L.D."/>
            <person name="Niblett D."/>
            <person name="Odell C."/>
            <person name="Oliver K."/>
            <person name="O'Neil S."/>
            <person name="Pearson D."/>
            <person name="Quail M.A."/>
            <person name="Rabbinowitsch E."/>
            <person name="Rutherford K.M."/>
            <person name="Rutter S."/>
            <person name="Saunders D."/>
            <person name="Seeger K."/>
            <person name="Sharp S."/>
            <person name="Skelton J."/>
            <person name="Simmonds M.N."/>
            <person name="Squares R."/>
            <person name="Squares S."/>
            <person name="Stevens K."/>
            <person name="Taylor K."/>
            <person name="Taylor R.G."/>
            <person name="Tivey A."/>
            <person name="Walsh S.V."/>
            <person name="Warren T."/>
            <person name="Whitehead S."/>
            <person name="Woodward J.R."/>
            <person name="Volckaert G."/>
            <person name="Aert R."/>
            <person name="Robben J."/>
            <person name="Grymonprez B."/>
            <person name="Weltjens I."/>
            <person name="Vanstreels E."/>
            <person name="Rieger M."/>
            <person name="Schaefer M."/>
            <person name="Mueller-Auer S."/>
            <person name="Gabel C."/>
            <person name="Fuchs M."/>
            <person name="Duesterhoeft A."/>
            <person name="Fritzc C."/>
            <person name="Holzer E."/>
            <person name="Moestl D."/>
            <person name="Hilbert H."/>
            <person name="Borzym K."/>
            <person name="Langer I."/>
            <person name="Beck A."/>
            <person name="Lehrach H."/>
            <person name="Reinhardt R."/>
            <person name="Pohl T.M."/>
            <person name="Eger P."/>
            <person name="Zimmermann W."/>
            <person name="Wedler H."/>
            <person name="Wambutt R."/>
            <person name="Purnelle B."/>
            <person name="Goffeau A."/>
            <person name="Cadieu E."/>
            <person name="Dreano S."/>
            <person name="Gloux S."/>
            <person name="Lelaure V."/>
            <person name="Mottier S."/>
            <person name="Galibert F."/>
            <person name="Aves S.J."/>
            <person name="Xiang Z."/>
            <person name="Hunt C."/>
            <person name="Moore K."/>
            <person name="Hurst S.M."/>
            <person name="Lucas M."/>
            <person name="Rochet M."/>
            <person name="Gaillardin C."/>
            <person name="Tallada V.A."/>
            <person name="Garzon A."/>
            <person name="Thode G."/>
            <person name="Daga R.R."/>
            <person name="Cruzado L."/>
            <person name="Jimenez J."/>
            <person name="Sanchez M."/>
            <person name="del Rey F."/>
            <person name="Benito J."/>
            <person name="Dominguez A."/>
            <person name="Revuelta J.L."/>
            <person name="Moreno S."/>
            <person name="Armstrong J."/>
            <person name="Forsburg S.L."/>
            <person name="Cerutti L."/>
            <person name="Lowe T."/>
            <person name="McCombie W.R."/>
            <person name="Paulsen I."/>
            <person name="Potashkin J."/>
            <person name="Shpakovski G.V."/>
            <person name="Ussery D."/>
            <person name="Barrell B.G."/>
            <person name="Nurse P."/>
        </authorList>
    </citation>
    <scope>NUCLEOTIDE SEQUENCE [LARGE SCALE GENOMIC DNA]</scope>
    <source>
        <strain>972 / ATCC 24843</strain>
    </source>
</reference>
<reference key="2">
    <citation type="journal article" date="2006" name="Genes Cells">
        <title>Ammonium transporter genes in the fission yeast Schizosaccharomyces pombe: role in ammonium uptake and a morphological transition.</title>
        <authorList>
            <person name="Mitsuzawa H."/>
        </authorList>
    </citation>
    <scope>FUNCTION</scope>
    <source>
        <strain>FY7406</strain>
    </source>
</reference>
<reference key="3">
    <citation type="journal article" date="2006" name="Nat. Biotechnol.">
        <title>ORFeome cloning and global analysis of protein localization in the fission yeast Schizosaccharomyces pombe.</title>
        <authorList>
            <person name="Matsuyama A."/>
            <person name="Arai R."/>
            <person name="Yashiroda Y."/>
            <person name="Shirai A."/>
            <person name="Kamata A."/>
            <person name="Sekido S."/>
            <person name="Kobayashi Y."/>
            <person name="Hashimoto A."/>
            <person name="Hamamoto M."/>
            <person name="Hiraoka Y."/>
            <person name="Horinouchi S."/>
            <person name="Yoshida M."/>
        </authorList>
    </citation>
    <scope>SUBCELLULAR LOCATION [LARGE SCALE ANALYSIS]</scope>
</reference>
<feature type="chain" id="PRO_0000278389" description="Ammonium transporter 3">
    <location>
        <begin position="1"/>
        <end position="517"/>
    </location>
</feature>
<feature type="topological domain" description="Extracellular" evidence="1">
    <location>
        <begin position="1"/>
        <end position="32"/>
    </location>
</feature>
<feature type="transmembrane region" description="Helical" evidence="1">
    <location>
        <begin position="33"/>
        <end position="53"/>
    </location>
</feature>
<feature type="topological domain" description="Cytoplasmic" evidence="1">
    <location>
        <begin position="54"/>
        <end position="69"/>
    </location>
</feature>
<feature type="transmembrane region" description="Helical" evidence="1">
    <location>
        <begin position="70"/>
        <end position="90"/>
    </location>
</feature>
<feature type="topological domain" description="Extracellular" evidence="1">
    <location>
        <begin position="91"/>
        <end position="118"/>
    </location>
</feature>
<feature type="transmembrane region" description="Helical" evidence="1">
    <location>
        <begin position="119"/>
        <end position="139"/>
    </location>
</feature>
<feature type="topological domain" description="Cytoplasmic" evidence="1">
    <location>
        <begin position="140"/>
        <end position="148"/>
    </location>
</feature>
<feature type="transmembrane region" description="Helical" evidence="1">
    <location>
        <begin position="149"/>
        <end position="169"/>
    </location>
</feature>
<feature type="topological domain" description="Extracellular" evidence="1">
    <location>
        <begin position="170"/>
        <end position="180"/>
    </location>
</feature>
<feature type="transmembrane region" description="Helical" evidence="1">
    <location>
        <begin position="181"/>
        <end position="201"/>
    </location>
</feature>
<feature type="topological domain" description="Cytoplasmic" evidence="1">
    <location>
        <begin position="202"/>
        <end position="272"/>
    </location>
</feature>
<feature type="transmembrane region" description="Helical" evidence="1">
    <location>
        <begin position="273"/>
        <end position="293"/>
    </location>
</feature>
<feature type="topological domain" description="Extracellular" evidence="1">
    <location>
        <begin position="294"/>
        <end position="299"/>
    </location>
</feature>
<feature type="transmembrane region" description="Helical" evidence="1">
    <location>
        <begin position="300"/>
        <end position="320"/>
    </location>
</feature>
<feature type="topological domain" description="Cytoplasmic" evidence="1">
    <location>
        <begin position="321"/>
        <end position="327"/>
    </location>
</feature>
<feature type="transmembrane region" description="Helical" evidence="1">
    <location>
        <begin position="328"/>
        <end position="348"/>
    </location>
</feature>
<feature type="topological domain" description="Extracellular" evidence="1">
    <location>
        <position position="349"/>
    </location>
</feature>
<feature type="transmembrane region" description="Helical" evidence="1">
    <location>
        <begin position="350"/>
        <end position="370"/>
    </location>
</feature>
<feature type="topological domain" description="Cytoplasmic" evidence="1">
    <location>
        <begin position="371"/>
        <end position="384"/>
    </location>
</feature>
<feature type="transmembrane region" description="Helical" evidence="1">
    <location>
        <begin position="385"/>
        <end position="405"/>
    </location>
</feature>
<feature type="topological domain" description="Extracellular" evidence="1">
    <location>
        <begin position="406"/>
        <end position="432"/>
    </location>
</feature>
<feature type="transmembrane region" description="Helical" evidence="1">
    <location>
        <begin position="433"/>
        <end position="453"/>
    </location>
</feature>
<feature type="topological domain" description="Cytoplasmic" evidence="1">
    <location>
        <begin position="454"/>
        <end position="517"/>
    </location>
</feature>